<protein>
    <recommendedName>
        <fullName evidence="1">UDP-N-acetylenolpyruvoylglucosamine reductase</fullName>
        <ecNumber evidence="1">1.3.1.98</ecNumber>
    </recommendedName>
    <alternativeName>
        <fullName evidence="1">UDP-N-acetylmuramate dehydrogenase</fullName>
    </alternativeName>
</protein>
<accession>Q133X3</accession>
<sequence length="310" mass="32920">MSFPDITPDLKAAMPSLRGRLLGNEPLAPLTWFRVGGPAQALFTPADEDDLGYFLSRLPTEVPMLCIGVGSNLIVRDGGLPGVVIRLAPRGFGDTRADGEIVYAGAAALDKRVAETAAAAKLGGLEFYFGIPGTVGGALRMNAGANGRETKDALIDATAFDRSGNRRVLGNADMQFSYRHSGADPALIFTSARFRGTPASPDAIRAKMNEVQAHRELAQPVREKTGGSTFKNPPDNSAWKLIDAAGCRGLRVGGAQVSEMHCNFLINTSDATAADIETLGETVRERVKAQSGIELQWEIKRIGVAVDAAR</sequence>
<dbReference type="EC" id="1.3.1.98" evidence="1"/>
<dbReference type="EMBL" id="CP000283">
    <property type="protein sequence ID" value="ABE40616.1"/>
    <property type="molecule type" value="Genomic_DNA"/>
</dbReference>
<dbReference type="SMR" id="Q133X3"/>
<dbReference type="STRING" id="316057.RPD_3392"/>
<dbReference type="KEGG" id="rpd:RPD_3392"/>
<dbReference type="eggNOG" id="COG0812">
    <property type="taxonomic scope" value="Bacteria"/>
</dbReference>
<dbReference type="HOGENOM" id="CLU_035304_1_0_5"/>
<dbReference type="BioCyc" id="RPAL316057:RPD_RS17060-MONOMER"/>
<dbReference type="UniPathway" id="UPA00219"/>
<dbReference type="Proteomes" id="UP000001818">
    <property type="component" value="Chromosome"/>
</dbReference>
<dbReference type="GO" id="GO:0005829">
    <property type="term" value="C:cytosol"/>
    <property type="evidence" value="ECO:0007669"/>
    <property type="project" value="TreeGrafter"/>
</dbReference>
<dbReference type="GO" id="GO:0071949">
    <property type="term" value="F:FAD binding"/>
    <property type="evidence" value="ECO:0007669"/>
    <property type="project" value="InterPro"/>
</dbReference>
<dbReference type="GO" id="GO:0008762">
    <property type="term" value="F:UDP-N-acetylmuramate dehydrogenase activity"/>
    <property type="evidence" value="ECO:0007669"/>
    <property type="project" value="UniProtKB-UniRule"/>
</dbReference>
<dbReference type="GO" id="GO:0051301">
    <property type="term" value="P:cell division"/>
    <property type="evidence" value="ECO:0007669"/>
    <property type="project" value="UniProtKB-KW"/>
</dbReference>
<dbReference type="GO" id="GO:0071555">
    <property type="term" value="P:cell wall organization"/>
    <property type="evidence" value="ECO:0007669"/>
    <property type="project" value="UniProtKB-KW"/>
</dbReference>
<dbReference type="GO" id="GO:0009252">
    <property type="term" value="P:peptidoglycan biosynthetic process"/>
    <property type="evidence" value="ECO:0007669"/>
    <property type="project" value="UniProtKB-UniRule"/>
</dbReference>
<dbReference type="GO" id="GO:0008360">
    <property type="term" value="P:regulation of cell shape"/>
    <property type="evidence" value="ECO:0007669"/>
    <property type="project" value="UniProtKB-KW"/>
</dbReference>
<dbReference type="Gene3D" id="3.30.465.10">
    <property type="match status" value="1"/>
</dbReference>
<dbReference type="Gene3D" id="3.90.78.10">
    <property type="entry name" value="UDP-N-acetylenolpyruvoylglucosamine reductase, C-terminal domain"/>
    <property type="match status" value="1"/>
</dbReference>
<dbReference type="Gene3D" id="3.30.43.10">
    <property type="entry name" value="Uridine Diphospho-n-acetylenolpyruvylglucosamine Reductase, domain 2"/>
    <property type="match status" value="1"/>
</dbReference>
<dbReference type="HAMAP" id="MF_00037">
    <property type="entry name" value="MurB"/>
    <property type="match status" value="1"/>
</dbReference>
<dbReference type="InterPro" id="IPR016166">
    <property type="entry name" value="FAD-bd_PCMH"/>
</dbReference>
<dbReference type="InterPro" id="IPR036318">
    <property type="entry name" value="FAD-bd_PCMH-like_sf"/>
</dbReference>
<dbReference type="InterPro" id="IPR016167">
    <property type="entry name" value="FAD-bd_PCMH_sub1"/>
</dbReference>
<dbReference type="InterPro" id="IPR016169">
    <property type="entry name" value="FAD-bd_PCMH_sub2"/>
</dbReference>
<dbReference type="InterPro" id="IPR003170">
    <property type="entry name" value="MurB"/>
</dbReference>
<dbReference type="InterPro" id="IPR011601">
    <property type="entry name" value="MurB_C"/>
</dbReference>
<dbReference type="InterPro" id="IPR036635">
    <property type="entry name" value="MurB_C_sf"/>
</dbReference>
<dbReference type="InterPro" id="IPR006094">
    <property type="entry name" value="Oxid_FAD_bind_N"/>
</dbReference>
<dbReference type="NCBIfam" id="TIGR00179">
    <property type="entry name" value="murB"/>
    <property type="match status" value="1"/>
</dbReference>
<dbReference type="NCBIfam" id="NF010480">
    <property type="entry name" value="PRK13905.1"/>
    <property type="match status" value="1"/>
</dbReference>
<dbReference type="PANTHER" id="PTHR21071">
    <property type="entry name" value="UDP-N-ACETYLENOLPYRUVOYLGLUCOSAMINE REDUCTASE"/>
    <property type="match status" value="1"/>
</dbReference>
<dbReference type="PANTHER" id="PTHR21071:SF4">
    <property type="entry name" value="UDP-N-ACETYLENOLPYRUVOYLGLUCOSAMINE REDUCTASE"/>
    <property type="match status" value="1"/>
</dbReference>
<dbReference type="Pfam" id="PF01565">
    <property type="entry name" value="FAD_binding_4"/>
    <property type="match status" value="1"/>
</dbReference>
<dbReference type="Pfam" id="PF02873">
    <property type="entry name" value="MurB_C"/>
    <property type="match status" value="1"/>
</dbReference>
<dbReference type="SUPFAM" id="SSF56176">
    <property type="entry name" value="FAD-binding/transporter-associated domain-like"/>
    <property type="match status" value="1"/>
</dbReference>
<dbReference type="SUPFAM" id="SSF56194">
    <property type="entry name" value="Uridine diphospho-N-Acetylenolpyruvylglucosamine reductase, MurB, C-terminal domain"/>
    <property type="match status" value="1"/>
</dbReference>
<dbReference type="PROSITE" id="PS51387">
    <property type="entry name" value="FAD_PCMH"/>
    <property type="match status" value="1"/>
</dbReference>
<feature type="chain" id="PRO_1000002903" description="UDP-N-acetylenolpyruvoylglucosamine reductase">
    <location>
        <begin position="1"/>
        <end position="310"/>
    </location>
</feature>
<feature type="domain" description="FAD-binding PCMH-type" evidence="1">
    <location>
        <begin position="35"/>
        <end position="199"/>
    </location>
</feature>
<feature type="active site" evidence="1">
    <location>
        <position position="179"/>
    </location>
</feature>
<feature type="active site" description="Proton donor" evidence="1">
    <location>
        <position position="228"/>
    </location>
</feature>
<feature type="active site" evidence="1">
    <location>
        <position position="298"/>
    </location>
</feature>
<comment type="function">
    <text evidence="1">Cell wall formation.</text>
</comment>
<comment type="catalytic activity">
    <reaction evidence="1">
        <text>UDP-N-acetyl-alpha-D-muramate + NADP(+) = UDP-N-acetyl-3-O-(1-carboxyvinyl)-alpha-D-glucosamine + NADPH + H(+)</text>
        <dbReference type="Rhea" id="RHEA:12248"/>
        <dbReference type="ChEBI" id="CHEBI:15378"/>
        <dbReference type="ChEBI" id="CHEBI:57783"/>
        <dbReference type="ChEBI" id="CHEBI:58349"/>
        <dbReference type="ChEBI" id="CHEBI:68483"/>
        <dbReference type="ChEBI" id="CHEBI:70757"/>
        <dbReference type="EC" id="1.3.1.98"/>
    </reaction>
</comment>
<comment type="cofactor">
    <cofactor evidence="1">
        <name>FAD</name>
        <dbReference type="ChEBI" id="CHEBI:57692"/>
    </cofactor>
</comment>
<comment type="pathway">
    <text evidence="1">Cell wall biogenesis; peptidoglycan biosynthesis.</text>
</comment>
<comment type="subcellular location">
    <subcellularLocation>
        <location evidence="1">Cytoplasm</location>
    </subcellularLocation>
</comment>
<comment type="similarity">
    <text evidence="1">Belongs to the MurB family.</text>
</comment>
<name>MURB_RHOPS</name>
<reference key="1">
    <citation type="submission" date="2006-03" db="EMBL/GenBank/DDBJ databases">
        <title>Complete sequence of Rhodopseudomonas palustris BisB5.</title>
        <authorList>
            <consortium name="US DOE Joint Genome Institute"/>
            <person name="Copeland A."/>
            <person name="Lucas S."/>
            <person name="Lapidus A."/>
            <person name="Barry K."/>
            <person name="Detter J.C."/>
            <person name="Glavina del Rio T."/>
            <person name="Hammon N."/>
            <person name="Israni S."/>
            <person name="Dalin E."/>
            <person name="Tice H."/>
            <person name="Pitluck S."/>
            <person name="Chain P."/>
            <person name="Malfatti S."/>
            <person name="Shin M."/>
            <person name="Vergez L."/>
            <person name="Schmutz J."/>
            <person name="Larimer F."/>
            <person name="Land M."/>
            <person name="Hauser L."/>
            <person name="Pelletier D.A."/>
            <person name="Kyrpides N."/>
            <person name="Lykidis A."/>
            <person name="Oda Y."/>
            <person name="Harwood C.S."/>
            <person name="Richardson P."/>
        </authorList>
    </citation>
    <scope>NUCLEOTIDE SEQUENCE [LARGE SCALE GENOMIC DNA]</scope>
    <source>
        <strain>BisB5</strain>
    </source>
</reference>
<organism>
    <name type="scientific">Rhodopseudomonas palustris (strain BisB5)</name>
    <dbReference type="NCBI Taxonomy" id="316057"/>
    <lineage>
        <taxon>Bacteria</taxon>
        <taxon>Pseudomonadati</taxon>
        <taxon>Pseudomonadota</taxon>
        <taxon>Alphaproteobacteria</taxon>
        <taxon>Hyphomicrobiales</taxon>
        <taxon>Nitrobacteraceae</taxon>
        <taxon>Rhodopseudomonas</taxon>
    </lineage>
</organism>
<gene>
    <name evidence="1" type="primary">murB</name>
    <name type="ordered locus">RPD_3392</name>
</gene>
<evidence type="ECO:0000255" key="1">
    <source>
        <dbReference type="HAMAP-Rule" id="MF_00037"/>
    </source>
</evidence>
<keyword id="KW-0131">Cell cycle</keyword>
<keyword id="KW-0132">Cell division</keyword>
<keyword id="KW-0133">Cell shape</keyword>
<keyword id="KW-0961">Cell wall biogenesis/degradation</keyword>
<keyword id="KW-0963">Cytoplasm</keyword>
<keyword id="KW-0274">FAD</keyword>
<keyword id="KW-0285">Flavoprotein</keyword>
<keyword id="KW-0521">NADP</keyword>
<keyword id="KW-0560">Oxidoreductase</keyword>
<keyword id="KW-0573">Peptidoglycan synthesis</keyword>
<proteinExistence type="inferred from homology"/>